<comment type="function">
    <text evidence="5">Catalyzes the formation of S-adenosylmethionine from methionine and ATP. The reaction comprises two steps that are both catalyzed by the same enzyme: formation of S-adenosylmethionine (AdoMet) and triphosphate, and subsequent hydrolysis of the triphosphate.</text>
</comment>
<comment type="catalytic activity">
    <reaction evidence="5">
        <text>L-methionine + ATP + H2O = S-adenosyl-L-methionine + phosphate + diphosphate</text>
        <dbReference type="Rhea" id="RHEA:21080"/>
        <dbReference type="ChEBI" id="CHEBI:15377"/>
        <dbReference type="ChEBI" id="CHEBI:30616"/>
        <dbReference type="ChEBI" id="CHEBI:33019"/>
        <dbReference type="ChEBI" id="CHEBI:43474"/>
        <dbReference type="ChEBI" id="CHEBI:57844"/>
        <dbReference type="ChEBI" id="CHEBI:59789"/>
        <dbReference type="EC" id="2.5.1.6"/>
    </reaction>
</comment>
<comment type="cofactor">
    <cofactor evidence="5">
        <name>Mn(2+)</name>
        <dbReference type="ChEBI" id="CHEBI:29035"/>
    </cofactor>
    <cofactor evidence="5">
        <name>Mg(2+)</name>
        <dbReference type="ChEBI" id="CHEBI:18420"/>
    </cofactor>
    <cofactor evidence="5">
        <name>Co(2+)</name>
        <dbReference type="ChEBI" id="CHEBI:48828"/>
    </cofactor>
    <text evidence="3 5">Binds 2 divalent ions per subunit. The metal ions interact primarily with the substrate (By similarity). Can utilize magnesium, manganese or cobalt (in vitro) (By similarity).</text>
</comment>
<comment type="cofactor">
    <cofactor evidence="5">
        <name>K(+)</name>
        <dbReference type="ChEBI" id="CHEBI:29103"/>
    </cofactor>
    <text evidence="3">Binds 1 potassium ion per subunit. The potassium ion interacts primarily with the substrate (By similarity).</text>
</comment>
<comment type="pathway">
    <text evidence="5">Amino-acid biosynthesis; S-adenosyl-L-methionine biosynthesis; S-adenosyl-L-methionine from L-methionine: step 1/1.</text>
</comment>
<comment type="subunit">
    <text evidence="1">Homotetramer.</text>
</comment>
<comment type="subcellular location">
    <subcellularLocation>
        <location evidence="1">Cytoplasm</location>
    </subcellularLocation>
</comment>
<comment type="similarity">
    <text evidence="6">Belongs to the AdoMet synthase family.</text>
</comment>
<proteinExistence type="evidence at transcript level"/>
<dbReference type="EC" id="2.5.1.6" evidence="5"/>
<dbReference type="EMBL" id="AP002482">
    <property type="protein sequence ID" value="BAA96637.1"/>
    <property type="molecule type" value="Genomic_DNA"/>
</dbReference>
<dbReference type="EMBL" id="AP008207">
    <property type="protein sequence ID" value="BAF04708.1"/>
    <property type="molecule type" value="Genomic_DNA"/>
</dbReference>
<dbReference type="EMBL" id="AP014957">
    <property type="protein sequence ID" value="BAS71668.1"/>
    <property type="molecule type" value="Genomic_DNA"/>
</dbReference>
<dbReference type="EMBL" id="CM000138">
    <property type="protein sequence ID" value="EAZ11533.1"/>
    <property type="molecule type" value="Genomic_DNA"/>
</dbReference>
<dbReference type="EMBL" id="AK241882">
    <property type="protein sequence ID" value="BAH01138.1"/>
    <property type="molecule type" value="mRNA"/>
</dbReference>
<dbReference type="RefSeq" id="XP_015614349.1">
    <property type="nucleotide sequence ID" value="XM_015758863.1"/>
</dbReference>
<dbReference type="RefSeq" id="XP_015614357.1">
    <property type="nucleotide sequence ID" value="XM_015758871.1"/>
</dbReference>
<dbReference type="SMR" id="Q9LGU6"/>
<dbReference type="FunCoup" id="Q9LGU6">
    <property type="interactions" value="1560"/>
</dbReference>
<dbReference type="STRING" id="39947.Q9LGU6"/>
<dbReference type="PaxDb" id="39947-Q9LGU6"/>
<dbReference type="EnsemblPlants" id="Os01t0293000-01">
    <property type="protein sequence ID" value="Os01t0293000-01"/>
    <property type="gene ID" value="Os01g0293000"/>
</dbReference>
<dbReference type="GeneID" id="4325163"/>
<dbReference type="Gramene" id="Os01t0293000-01">
    <property type="protein sequence ID" value="Os01t0293000-01"/>
    <property type="gene ID" value="Os01g0293000"/>
</dbReference>
<dbReference type="KEGG" id="dosa:Os01g0293000"/>
<dbReference type="KEGG" id="osa:4325163"/>
<dbReference type="eggNOG" id="KOG1506">
    <property type="taxonomic scope" value="Eukaryota"/>
</dbReference>
<dbReference type="HOGENOM" id="CLU_041802_1_1_1"/>
<dbReference type="InParanoid" id="Q9LGU6"/>
<dbReference type="OMA" id="CEYAFRH"/>
<dbReference type="OrthoDB" id="5852090at2759"/>
<dbReference type="PlantReactome" id="R-OSA-1119334">
    <property type="pathway name" value="Ethylene biosynthesis from methionine"/>
</dbReference>
<dbReference type="PlantReactome" id="R-OSA-1119501">
    <property type="pathway name" value="S-adenosyl-L-methionine cycle"/>
</dbReference>
<dbReference type="PlantReactome" id="R-OSA-1119624">
    <property type="pathway name" value="Methionine salvage pathway"/>
</dbReference>
<dbReference type="PlantReactome" id="R-OSA-9025754">
    <property type="pathway name" value="Mugineic acid biosynthesis"/>
</dbReference>
<dbReference type="UniPathway" id="UPA00315">
    <property type="reaction ID" value="UER00080"/>
</dbReference>
<dbReference type="Proteomes" id="UP000000763">
    <property type="component" value="Chromosome 1"/>
</dbReference>
<dbReference type="Proteomes" id="UP000007752">
    <property type="component" value="Chromosome 1"/>
</dbReference>
<dbReference type="Proteomes" id="UP000059680">
    <property type="component" value="Chromosome 1"/>
</dbReference>
<dbReference type="GO" id="GO:0005829">
    <property type="term" value="C:cytosol"/>
    <property type="evidence" value="ECO:0000318"/>
    <property type="project" value="GO_Central"/>
</dbReference>
<dbReference type="GO" id="GO:0005524">
    <property type="term" value="F:ATP binding"/>
    <property type="evidence" value="ECO:0007669"/>
    <property type="project" value="UniProtKB-KW"/>
</dbReference>
<dbReference type="GO" id="GO:0046872">
    <property type="term" value="F:metal ion binding"/>
    <property type="evidence" value="ECO:0007669"/>
    <property type="project" value="UniProtKB-KW"/>
</dbReference>
<dbReference type="GO" id="GO:0004478">
    <property type="term" value="F:methionine adenosyltransferase activity"/>
    <property type="evidence" value="ECO:0000318"/>
    <property type="project" value="GO_Central"/>
</dbReference>
<dbReference type="GO" id="GO:0006730">
    <property type="term" value="P:one-carbon metabolic process"/>
    <property type="evidence" value="ECO:0007669"/>
    <property type="project" value="UniProtKB-KW"/>
</dbReference>
<dbReference type="GO" id="GO:0006556">
    <property type="term" value="P:S-adenosylmethionine biosynthetic process"/>
    <property type="evidence" value="ECO:0000318"/>
    <property type="project" value="GO_Central"/>
</dbReference>
<dbReference type="CDD" id="cd18079">
    <property type="entry name" value="S-AdoMet_synt"/>
    <property type="match status" value="1"/>
</dbReference>
<dbReference type="FunFam" id="3.30.300.10:FF:000001">
    <property type="entry name" value="S-adenosylmethionine synthase"/>
    <property type="match status" value="1"/>
</dbReference>
<dbReference type="FunFam" id="3.30.300.10:FF:000003">
    <property type="entry name" value="S-adenosylmethionine synthase"/>
    <property type="match status" value="1"/>
</dbReference>
<dbReference type="FunFam" id="3.30.300.10:FF:000004">
    <property type="entry name" value="S-adenosylmethionine synthase"/>
    <property type="match status" value="1"/>
</dbReference>
<dbReference type="Gene3D" id="3.30.300.10">
    <property type="match status" value="3"/>
</dbReference>
<dbReference type="HAMAP" id="MF_00086">
    <property type="entry name" value="S_AdoMet_synth1"/>
    <property type="match status" value="1"/>
</dbReference>
<dbReference type="InterPro" id="IPR022631">
    <property type="entry name" value="ADOMET_SYNTHASE_CS"/>
</dbReference>
<dbReference type="InterPro" id="IPR022630">
    <property type="entry name" value="S-AdoMet_synt_C"/>
</dbReference>
<dbReference type="InterPro" id="IPR022629">
    <property type="entry name" value="S-AdoMet_synt_central"/>
</dbReference>
<dbReference type="InterPro" id="IPR022628">
    <property type="entry name" value="S-AdoMet_synt_N"/>
</dbReference>
<dbReference type="InterPro" id="IPR002133">
    <property type="entry name" value="S-AdoMet_synthetase"/>
</dbReference>
<dbReference type="InterPro" id="IPR022636">
    <property type="entry name" value="S-AdoMet_synthetase_sfam"/>
</dbReference>
<dbReference type="NCBIfam" id="TIGR01034">
    <property type="entry name" value="metK"/>
    <property type="match status" value="1"/>
</dbReference>
<dbReference type="PANTHER" id="PTHR11964">
    <property type="entry name" value="S-ADENOSYLMETHIONINE SYNTHETASE"/>
    <property type="match status" value="1"/>
</dbReference>
<dbReference type="Pfam" id="PF02773">
    <property type="entry name" value="S-AdoMet_synt_C"/>
    <property type="match status" value="1"/>
</dbReference>
<dbReference type="Pfam" id="PF02772">
    <property type="entry name" value="S-AdoMet_synt_M"/>
    <property type="match status" value="1"/>
</dbReference>
<dbReference type="Pfam" id="PF00438">
    <property type="entry name" value="S-AdoMet_synt_N"/>
    <property type="match status" value="1"/>
</dbReference>
<dbReference type="PIRSF" id="PIRSF000497">
    <property type="entry name" value="MAT"/>
    <property type="match status" value="1"/>
</dbReference>
<dbReference type="SUPFAM" id="SSF55973">
    <property type="entry name" value="S-adenosylmethionine synthetase"/>
    <property type="match status" value="3"/>
</dbReference>
<dbReference type="PROSITE" id="PS00376">
    <property type="entry name" value="ADOMET_SYNTHASE_1"/>
    <property type="match status" value="1"/>
</dbReference>
<dbReference type="PROSITE" id="PS00377">
    <property type="entry name" value="ADOMET_SYNTHASE_2"/>
    <property type="match status" value="1"/>
</dbReference>
<sequence length="396" mass="43310">MAEVDTFLFTSESVNEGHPDKLCDQISDAVLDACLAEDPESKVACETCTKTNMVMVFGEITTKANVDYEKIVRDTCRGIGFVSNDVGLDAEHCKVLVNIEQQSPDIAQGVHGHFTKRPEEIGAGDQGHMFGYATDETPELMPLSHVLATKLGARLTEVRKNGACAWLRPDGKTQVTVEYQNDNGAMVPLRVHTVLISTQHDETVTNDEIAADLKEHVIKPVIPEQYLDEKTIFHLNPSGRFVIGGPHGDAGLTGRKIIIDTYGGWGAHGGGAFSGKDPTKVDRSGAYIARQAAKSIVANGLARRCIVQVSYAIGVPEPLSVFVDTYGTGKIPDREILRIVTENFDFRPGMIIINLDLMRGGNGRYLKTAAYGHFGREDPDFTWEVVKPLKWEEPSA</sequence>
<reference key="1">
    <citation type="journal article" date="2002" name="Nature">
        <title>The genome sequence and structure of rice chromosome 1.</title>
        <authorList>
            <person name="Sasaki T."/>
            <person name="Matsumoto T."/>
            <person name="Yamamoto K."/>
            <person name="Sakata K."/>
            <person name="Baba T."/>
            <person name="Katayose Y."/>
            <person name="Wu J."/>
            <person name="Niimura Y."/>
            <person name="Cheng Z."/>
            <person name="Nagamura Y."/>
            <person name="Antonio B.A."/>
            <person name="Kanamori H."/>
            <person name="Hosokawa S."/>
            <person name="Masukawa M."/>
            <person name="Arikawa K."/>
            <person name="Chiden Y."/>
            <person name="Hayashi M."/>
            <person name="Okamoto M."/>
            <person name="Ando T."/>
            <person name="Aoki H."/>
            <person name="Arita K."/>
            <person name="Hamada M."/>
            <person name="Harada C."/>
            <person name="Hijishita S."/>
            <person name="Honda M."/>
            <person name="Ichikawa Y."/>
            <person name="Idonuma A."/>
            <person name="Iijima M."/>
            <person name="Ikeda M."/>
            <person name="Ikeno M."/>
            <person name="Ito S."/>
            <person name="Ito T."/>
            <person name="Ito Y."/>
            <person name="Ito Y."/>
            <person name="Iwabuchi A."/>
            <person name="Kamiya K."/>
            <person name="Karasawa W."/>
            <person name="Katagiri S."/>
            <person name="Kikuta A."/>
            <person name="Kobayashi N."/>
            <person name="Kono I."/>
            <person name="Machita K."/>
            <person name="Maehara T."/>
            <person name="Mizuno H."/>
            <person name="Mizubayashi T."/>
            <person name="Mukai Y."/>
            <person name="Nagasaki H."/>
            <person name="Nakashima M."/>
            <person name="Nakama Y."/>
            <person name="Nakamichi Y."/>
            <person name="Nakamura M."/>
            <person name="Namiki N."/>
            <person name="Negishi M."/>
            <person name="Ohta I."/>
            <person name="Ono N."/>
            <person name="Saji S."/>
            <person name="Sakai K."/>
            <person name="Shibata M."/>
            <person name="Shimokawa T."/>
            <person name="Shomura A."/>
            <person name="Song J."/>
            <person name="Takazaki Y."/>
            <person name="Terasawa K."/>
            <person name="Tsuji K."/>
            <person name="Waki K."/>
            <person name="Yamagata H."/>
            <person name="Yamane H."/>
            <person name="Yoshiki S."/>
            <person name="Yoshihara R."/>
            <person name="Yukawa K."/>
            <person name="Zhong H."/>
            <person name="Iwama H."/>
            <person name="Endo T."/>
            <person name="Ito H."/>
            <person name="Hahn J.H."/>
            <person name="Kim H.-I."/>
            <person name="Eun M.-Y."/>
            <person name="Yano M."/>
            <person name="Jiang J."/>
            <person name="Gojobori T."/>
        </authorList>
    </citation>
    <scope>NUCLEOTIDE SEQUENCE [LARGE SCALE GENOMIC DNA]</scope>
    <source>
        <strain>cv. Nipponbare</strain>
    </source>
</reference>
<reference key="2">
    <citation type="journal article" date="2005" name="Nature">
        <title>The map-based sequence of the rice genome.</title>
        <authorList>
            <consortium name="International rice genome sequencing project (IRGSP)"/>
        </authorList>
    </citation>
    <scope>NUCLEOTIDE SEQUENCE [LARGE SCALE GENOMIC DNA]</scope>
    <source>
        <strain>cv. Nipponbare</strain>
    </source>
</reference>
<reference key="3">
    <citation type="journal article" date="2008" name="Nucleic Acids Res.">
        <title>The rice annotation project database (RAP-DB): 2008 update.</title>
        <authorList>
            <consortium name="The rice annotation project (RAP)"/>
        </authorList>
    </citation>
    <scope>GENOME REANNOTATION</scope>
    <source>
        <strain>cv. Nipponbare</strain>
    </source>
</reference>
<reference key="4">
    <citation type="journal article" date="2013" name="Rice">
        <title>Improvement of the Oryza sativa Nipponbare reference genome using next generation sequence and optical map data.</title>
        <authorList>
            <person name="Kawahara Y."/>
            <person name="de la Bastide M."/>
            <person name="Hamilton J.P."/>
            <person name="Kanamori H."/>
            <person name="McCombie W.R."/>
            <person name="Ouyang S."/>
            <person name="Schwartz D.C."/>
            <person name="Tanaka T."/>
            <person name="Wu J."/>
            <person name="Zhou S."/>
            <person name="Childs K.L."/>
            <person name="Davidson R.M."/>
            <person name="Lin H."/>
            <person name="Quesada-Ocampo L."/>
            <person name="Vaillancourt B."/>
            <person name="Sakai H."/>
            <person name="Lee S.S."/>
            <person name="Kim J."/>
            <person name="Numa H."/>
            <person name="Itoh T."/>
            <person name="Buell C.R."/>
            <person name="Matsumoto T."/>
        </authorList>
    </citation>
    <scope>GENOME REANNOTATION</scope>
    <source>
        <strain>cv. Nipponbare</strain>
    </source>
</reference>
<reference key="5">
    <citation type="journal article" date="2005" name="PLoS Biol.">
        <title>The genomes of Oryza sativa: a history of duplications.</title>
        <authorList>
            <person name="Yu J."/>
            <person name="Wang J."/>
            <person name="Lin W."/>
            <person name="Li S."/>
            <person name="Li H."/>
            <person name="Zhou J."/>
            <person name="Ni P."/>
            <person name="Dong W."/>
            <person name="Hu S."/>
            <person name="Zeng C."/>
            <person name="Zhang J."/>
            <person name="Zhang Y."/>
            <person name="Li R."/>
            <person name="Xu Z."/>
            <person name="Li S."/>
            <person name="Li X."/>
            <person name="Zheng H."/>
            <person name="Cong L."/>
            <person name="Lin L."/>
            <person name="Yin J."/>
            <person name="Geng J."/>
            <person name="Li G."/>
            <person name="Shi J."/>
            <person name="Liu J."/>
            <person name="Lv H."/>
            <person name="Li J."/>
            <person name="Wang J."/>
            <person name="Deng Y."/>
            <person name="Ran L."/>
            <person name="Shi X."/>
            <person name="Wang X."/>
            <person name="Wu Q."/>
            <person name="Li C."/>
            <person name="Ren X."/>
            <person name="Wang J."/>
            <person name="Wang X."/>
            <person name="Li D."/>
            <person name="Liu D."/>
            <person name="Zhang X."/>
            <person name="Ji Z."/>
            <person name="Zhao W."/>
            <person name="Sun Y."/>
            <person name="Zhang Z."/>
            <person name="Bao J."/>
            <person name="Han Y."/>
            <person name="Dong L."/>
            <person name="Ji J."/>
            <person name="Chen P."/>
            <person name="Wu S."/>
            <person name="Liu J."/>
            <person name="Xiao Y."/>
            <person name="Bu D."/>
            <person name="Tan J."/>
            <person name="Yang L."/>
            <person name="Ye C."/>
            <person name="Zhang J."/>
            <person name="Xu J."/>
            <person name="Zhou Y."/>
            <person name="Yu Y."/>
            <person name="Zhang B."/>
            <person name="Zhuang S."/>
            <person name="Wei H."/>
            <person name="Liu B."/>
            <person name="Lei M."/>
            <person name="Yu H."/>
            <person name="Li Y."/>
            <person name="Xu H."/>
            <person name="Wei S."/>
            <person name="He X."/>
            <person name="Fang L."/>
            <person name="Zhang Z."/>
            <person name="Zhang Y."/>
            <person name="Huang X."/>
            <person name="Su Z."/>
            <person name="Tong W."/>
            <person name="Li J."/>
            <person name="Tong Z."/>
            <person name="Li S."/>
            <person name="Ye J."/>
            <person name="Wang L."/>
            <person name="Fang L."/>
            <person name="Lei T."/>
            <person name="Chen C.-S."/>
            <person name="Chen H.-C."/>
            <person name="Xu Z."/>
            <person name="Li H."/>
            <person name="Huang H."/>
            <person name="Zhang F."/>
            <person name="Xu H."/>
            <person name="Li N."/>
            <person name="Zhao C."/>
            <person name="Li S."/>
            <person name="Dong L."/>
            <person name="Huang Y."/>
            <person name="Li L."/>
            <person name="Xi Y."/>
            <person name="Qi Q."/>
            <person name="Li W."/>
            <person name="Zhang B."/>
            <person name="Hu W."/>
            <person name="Zhang Y."/>
            <person name="Tian X."/>
            <person name="Jiao Y."/>
            <person name="Liang X."/>
            <person name="Jin J."/>
            <person name="Gao L."/>
            <person name="Zheng W."/>
            <person name="Hao B."/>
            <person name="Liu S.-M."/>
            <person name="Wang W."/>
            <person name="Yuan L."/>
            <person name="Cao M."/>
            <person name="McDermott J."/>
            <person name="Samudrala R."/>
            <person name="Wang J."/>
            <person name="Wong G.K.-S."/>
            <person name="Yang H."/>
        </authorList>
    </citation>
    <scope>NUCLEOTIDE SEQUENCE [LARGE SCALE GENOMIC DNA]</scope>
    <source>
        <strain>cv. Nipponbare</strain>
    </source>
</reference>
<reference key="6">
    <citation type="submission" date="2006-10" db="EMBL/GenBank/DDBJ databases">
        <title>Oryza sativa full length cDNA.</title>
        <authorList>
            <consortium name="The rice full-length cDNA consortium"/>
        </authorList>
    </citation>
    <scope>NUCLEOTIDE SEQUENCE [LARGE SCALE MRNA]</scope>
    <source>
        <strain>cv. Nipponbare</strain>
    </source>
</reference>
<organism>
    <name type="scientific">Oryza sativa subsp. japonica</name>
    <name type="common">Rice</name>
    <dbReference type="NCBI Taxonomy" id="39947"/>
    <lineage>
        <taxon>Eukaryota</taxon>
        <taxon>Viridiplantae</taxon>
        <taxon>Streptophyta</taxon>
        <taxon>Embryophyta</taxon>
        <taxon>Tracheophyta</taxon>
        <taxon>Spermatophyta</taxon>
        <taxon>Magnoliopsida</taxon>
        <taxon>Liliopsida</taxon>
        <taxon>Poales</taxon>
        <taxon>Poaceae</taxon>
        <taxon>BOP clade</taxon>
        <taxon>Oryzoideae</taxon>
        <taxon>Oryzeae</taxon>
        <taxon>Oryzinae</taxon>
        <taxon>Oryza</taxon>
        <taxon>Oryza sativa</taxon>
    </lineage>
</organism>
<protein>
    <recommendedName>
        <fullName>S-adenosylmethionine synthase 3</fullName>
        <shortName>AdoMet synthase 3</shortName>
        <ecNumber evidence="5">2.5.1.6</ecNumber>
    </recommendedName>
    <alternativeName>
        <fullName>Methionine adenosyltransferase 3</fullName>
        <shortName>MAT 3</shortName>
    </alternativeName>
</protein>
<evidence type="ECO:0000250" key="1"/>
<evidence type="ECO:0000250" key="2">
    <source>
        <dbReference type="UniProtKB" id="P0A817"/>
    </source>
</evidence>
<evidence type="ECO:0000250" key="3">
    <source>
        <dbReference type="UniProtKB" id="P13444"/>
    </source>
</evidence>
<evidence type="ECO:0000250" key="4">
    <source>
        <dbReference type="UniProtKB" id="Q00266"/>
    </source>
</evidence>
<evidence type="ECO:0000250" key="5">
    <source>
        <dbReference type="UniProtKB" id="Q96551"/>
    </source>
</evidence>
<evidence type="ECO:0000305" key="6"/>
<accession>Q9LGU6</accession>
<accession>A0A0P0V1G6</accession>
<keyword id="KW-0067">ATP-binding</keyword>
<keyword id="KW-0170">Cobalt</keyword>
<keyword id="KW-0963">Cytoplasm</keyword>
<keyword id="KW-0460">Magnesium</keyword>
<keyword id="KW-0479">Metal-binding</keyword>
<keyword id="KW-0547">Nucleotide-binding</keyword>
<keyword id="KW-0554">One-carbon metabolism</keyword>
<keyword id="KW-0630">Potassium</keyword>
<keyword id="KW-1185">Reference proteome</keyword>
<keyword id="KW-0808">Transferase</keyword>
<feature type="chain" id="PRO_0000363031" description="S-adenosylmethionine synthase 3">
    <location>
        <begin position="1"/>
        <end position="396"/>
    </location>
</feature>
<feature type="binding site" evidence="3">
    <location>
        <position position="12"/>
    </location>
    <ligand>
        <name>Mg(2+)</name>
        <dbReference type="ChEBI" id="CHEBI:18420"/>
    </ligand>
</feature>
<feature type="binding site" description="in other chain" evidence="4">
    <location>
        <position position="18"/>
    </location>
    <ligand>
        <name>ATP</name>
        <dbReference type="ChEBI" id="CHEBI:30616"/>
        <note>ligand shared between two neighboring subunits</note>
    </ligand>
</feature>
<feature type="binding site" evidence="2">
    <location>
        <position position="46"/>
    </location>
    <ligand>
        <name>K(+)</name>
        <dbReference type="ChEBI" id="CHEBI:29103"/>
    </ligand>
</feature>
<feature type="binding site" description="in other chain" evidence="2">
    <location>
        <position position="59"/>
    </location>
    <ligand>
        <name>L-methionine</name>
        <dbReference type="ChEBI" id="CHEBI:57844"/>
        <note>ligand shared between two neighboring subunits</note>
    </ligand>
</feature>
<feature type="binding site" description="in other chain" evidence="2">
    <location>
        <position position="102"/>
    </location>
    <ligand>
        <name>L-methionine</name>
        <dbReference type="ChEBI" id="CHEBI:57844"/>
        <note>ligand shared between two neighboring subunits</note>
    </ligand>
</feature>
<feature type="binding site" description="in other chain" evidence="4">
    <location>
        <begin position="170"/>
        <end position="172"/>
    </location>
    <ligand>
        <name>ATP</name>
        <dbReference type="ChEBI" id="CHEBI:30616"/>
        <note>ligand shared between two neighboring subunits</note>
    </ligand>
</feature>
<feature type="binding site" description="in other chain" evidence="4">
    <location>
        <begin position="238"/>
        <end position="241"/>
    </location>
    <ligand>
        <name>ATP</name>
        <dbReference type="ChEBI" id="CHEBI:30616"/>
        <note>ligand shared between two neighboring subunits</note>
    </ligand>
</feature>
<feature type="binding site" description="in other chain" evidence="4">
    <location>
        <position position="249"/>
    </location>
    <ligand>
        <name>ATP</name>
        <dbReference type="ChEBI" id="CHEBI:30616"/>
        <note>ligand shared between two neighboring subunits</note>
    </ligand>
</feature>
<feature type="binding site" evidence="2">
    <location>
        <position position="249"/>
    </location>
    <ligand>
        <name>L-methionine</name>
        <dbReference type="ChEBI" id="CHEBI:57844"/>
        <note>ligand shared between two neighboring subunits</note>
    </ligand>
</feature>
<feature type="binding site" description="in other chain" evidence="2">
    <location>
        <begin position="255"/>
        <end position="256"/>
    </location>
    <ligand>
        <name>ATP</name>
        <dbReference type="ChEBI" id="CHEBI:30616"/>
        <note>ligand shared between two neighboring subunits</note>
    </ligand>
</feature>
<feature type="binding site" evidence="2">
    <location>
        <position position="272"/>
    </location>
    <ligand>
        <name>ATP</name>
        <dbReference type="ChEBI" id="CHEBI:30616"/>
        <note>ligand shared between two neighboring subunits</note>
    </ligand>
</feature>
<feature type="binding site" evidence="2">
    <location>
        <position position="276"/>
    </location>
    <ligand>
        <name>ATP</name>
        <dbReference type="ChEBI" id="CHEBI:30616"/>
        <note>ligand shared between two neighboring subunits</note>
    </ligand>
</feature>
<feature type="binding site" evidence="3">
    <location>
        <position position="280"/>
    </location>
    <ligand>
        <name>ATP</name>
        <dbReference type="ChEBI" id="CHEBI:30616"/>
        <note>ligand shared between two neighboring subunits</note>
    </ligand>
</feature>
<feature type="binding site" description="in other chain" evidence="2">
    <location>
        <position position="280"/>
    </location>
    <ligand>
        <name>L-methionine</name>
        <dbReference type="ChEBI" id="CHEBI:57844"/>
        <note>ligand shared between two neighboring subunits</note>
    </ligand>
</feature>
<name>METK3_ORYSJ</name>
<gene>
    <name type="primary">METK3</name>
    <name type="ordered locus">Os01g0293000</name>
    <name type="ordered locus">LOC_Os01g18860</name>
    <name type="ORF">OsJ_001358</name>
    <name type="ORF">P0706B05.41</name>
</gene>